<accession>B5F3I9</accession>
<protein>
    <recommendedName>
        <fullName evidence="1">Aspartate--tRNA ligase</fullName>
        <ecNumber evidence="1">6.1.1.12</ecNumber>
    </recommendedName>
    <alternativeName>
        <fullName evidence="1">Aspartyl-tRNA synthetase</fullName>
        <shortName evidence="1">AspRS</shortName>
    </alternativeName>
</protein>
<comment type="function">
    <text evidence="1">Catalyzes the attachment of L-aspartate to tRNA(Asp) in a two-step reaction: L-aspartate is first activated by ATP to form Asp-AMP and then transferred to the acceptor end of tRNA(Asp).</text>
</comment>
<comment type="catalytic activity">
    <reaction evidence="1">
        <text>tRNA(Asp) + L-aspartate + ATP = L-aspartyl-tRNA(Asp) + AMP + diphosphate</text>
        <dbReference type="Rhea" id="RHEA:19649"/>
        <dbReference type="Rhea" id="RHEA-COMP:9660"/>
        <dbReference type="Rhea" id="RHEA-COMP:9678"/>
        <dbReference type="ChEBI" id="CHEBI:29991"/>
        <dbReference type="ChEBI" id="CHEBI:30616"/>
        <dbReference type="ChEBI" id="CHEBI:33019"/>
        <dbReference type="ChEBI" id="CHEBI:78442"/>
        <dbReference type="ChEBI" id="CHEBI:78516"/>
        <dbReference type="ChEBI" id="CHEBI:456215"/>
        <dbReference type="EC" id="6.1.1.12"/>
    </reaction>
</comment>
<comment type="subunit">
    <text evidence="1">Homodimer.</text>
</comment>
<comment type="subcellular location">
    <subcellularLocation>
        <location evidence="1">Cytoplasm</location>
    </subcellularLocation>
</comment>
<comment type="similarity">
    <text evidence="1">Belongs to the class-II aminoacyl-tRNA synthetase family. Type 1 subfamily.</text>
</comment>
<proteinExistence type="inferred from homology"/>
<sequence length="590" mass="65767">MRTEYCGQLRLSHVGQQVTLCGWVNRRRDLGSLIFIDMRDREGIVQVFFDPDRADALKLASELRNEFCIQVTGTVRARDAKNVNADMATGEIEVLASSLTIINRADSLPLDANHVNTEEARLKYRYLDLRRPEMAQRLKTRAKITSLVRRFMDEHGFLDIETPMLTKATPEGARDYLVPSRVHKGKFYALPQSPQLFKQLLMMSGFDRYYQIVKCFRDEDLRADRQPEFTQIDVETSFMTAPQVREVMEALVRHLWLEVKGVDLGDFPVMTFAEAERRYGSDKPDLRNPMELVDVADLLKSVEFAVFAGPANDPKGRVAALRVPGGAQLSRKQIDDYGNFVKIYGAKGLAYIKVNERAKGLDGINSPVAKFLTADIVDAILERTGAQDGDMIFFGADNKKVVADALGALRLKLGKDLSLTDEDKWAPLWVIDFPMFEDDGEGGLTAMHHPFTAPRDMTASELKTAPEEAVANAYDMVINGYEVGGGSVRIHNGEMQQTVFGILGINEQEQREKFGFLLDALKYGTPPHAGLAFGLDRLTMLLTGTDNIRDVIAFPKTTAAACLMTEAPSFANQAALTELGIQVVKKAENN</sequence>
<organism>
    <name type="scientific">Salmonella agona (strain SL483)</name>
    <dbReference type="NCBI Taxonomy" id="454166"/>
    <lineage>
        <taxon>Bacteria</taxon>
        <taxon>Pseudomonadati</taxon>
        <taxon>Pseudomonadota</taxon>
        <taxon>Gammaproteobacteria</taxon>
        <taxon>Enterobacterales</taxon>
        <taxon>Enterobacteriaceae</taxon>
        <taxon>Salmonella</taxon>
    </lineage>
</organism>
<gene>
    <name evidence="1" type="primary">aspS</name>
    <name type="ordered locus">SeAg_B1222</name>
</gene>
<keyword id="KW-0030">Aminoacyl-tRNA synthetase</keyword>
<keyword id="KW-0067">ATP-binding</keyword>
<keyword id="KW-0963">Cytoplasm</keyword>
<keyword id="KW-0436">Ligase</keyword>
<keyword id="KW-0547">Nucleotide-binding</keyword>
<keyword id="KW-0648">Protein biosynthesis</keyword>
<feature type="chain" id="PRO_1000091035" description="Aspartate--tRNA ligase">
    <location>
        <begin position="1"/>
        <end position="590"/>
    </location>
</feature>
<feature type="region of interest" description="Aspartate" evidence="1">
    <location>
        <begin position="195"/>
        <end position="198"/>
    </location>
</feature>
<feature type="binding site" evidence="1">
    <location>
        <position position="171"/>
    </location>
    <ligand>
        <name>L-aspartate</name>
        <dbReference type="ChEBI" id="CHEBI:29991"/>
    </ligand>
</feature>
<feature type="binding site" evidence="1">
    <location>
        <begin position="217"/>
        <end position="219"/>
    </location>
    <ligand>
        <name>ATP</name>
        <dbReference type="ChEBI" id="CHEBI:30616"/>
    </ligand>
</feature>
<feature type="binding site" evidence="1">
    <location>
        <position position="217"/>
    </location>
    <ligand>
        <name>L-aspartate</name>
        <dbReference type="ChEBI" id="CHEBI:29991"/>
    </ligand>
</feature>
<feature type="binding site" evidence="1">
    <location>
        <position position="226"/>
    </location>
    <ligand>
        <name>ATP</name>
        <dbReference type="ChEBI" id="CHEBI:30616"/>
    </ligand>
</feature>
<feature type="binding site" evidence="1">
    <location>
        <position position="448"/>
    </location>
    <ligand>
        <name>L-aspartate</name>
        <dbReference type="ChEBI" id="CHEBI:29991"/>
    </ligand>
</feature>
<feature type="binding site" evidence="1">
    <location>
        <position position="482"/>
    </location>
    <ligand>
        <name>ATP</name>
        <dbReference type="ChEBI" id="CHEBI:30616"/>
    </ligand>
</feature>
<feature type="binding site" evidence="1">
    <location>
        <position position="489"/>
    </location>
    <ligand>
        <name>L-aspartate</name>
        <dbReference type="ChEBI" id="CHEBI:29991"/>
    </ligand>
</feature>
<feature type="binding site" evidence="1">
    <location>
        <begin position="534"/>
        <end position="537"/>
    </location>
    <ligand>
        <name>ATP</name>
        <dbReference type="ChEBI" id="CHEBI:30616"/>
    </ligand>
</feature>
<evidence type="ECO:0000255" key="1">
    <source>
        <dbReference type="HAMAP-Rule" id="MF_00044"/>
    </source>
</evidence>
<dbReference type="EC" id="6.1.1.12" evidence="1"/>
<dbReference type="EMBL" id="CP001138">
    <property type="protein sequence ID" value="ACH50843.1"/>
    <property type="molecule type" value="Genomic_DNA"/>
</dbReference>
<dbReference type="RefSeq" id="WP_001258637.1">
    <property type="nucleotide sequence ID" value="NC_011149.1"/>
</dbReference>
<dbReference type="SMR" id="B5F3I9"/>
<dbReference type="KEGG" id="sea:SeAg_B1222"/>
<dbReference type="HOGENOM" id="CLU_014330_3_2_6"/>
<dbReference type="Proteomes" id="UP000008819">
    <property type="component" value="Chromosome"/>
</dbReference>
<dbReference type="GO" id="GO:0005737">
    <property type="term" value="C:cytoplasm"/>
    <property type="evidence" value="ECO:0007669"/>
    <property type="project" value="UniProtKB-SubCell"/>
</dbReference>
<dbReference type="GO" id="GO:0004815">
    <property type="term" value="F:aspartate-tRNA ligase activity"/>
    <property type="evidence" value="ECO:0007669"/>
    <property type="project" value="UniProtKB-UniRule"/>
</dbReference>
<dbReference type="GO" id="GO:0005524">
    <property type="term" value="F:ATP binding"/>
    <property type="evidence" value="ECO:0007669"/>
    <property type="project" value="UniProtKB-UniRule"/>
</dbReference>
<dbReference type="GO" id="GO:0003676">
    <property type="term" value="F:nucleic acid binding"/>
    <property type="evidence" value="ECO:0007669"/>
    <property type="project" value="InterPro"/>
</dbReference>
<dbReference type="GO" id="GO:0006422">
    <property type="term" value="P:aspartyl-tRNA aminoacylation"/>
    <property type="evidence" value="ECO:0007669"/>
    <property type="project" value="UniProtKB-UniRule"/>
</dbReference>
<dbReference type="CDD" id="cd00777">
    <property type="entry name" value="AspRS_core"/>
    <property type="match status" value="1"/>
</dbReference>
<dbReference type="CDD" id="cd04317">
    <property type="entry name" value="EcAspRS_like_N"/>
    <property type="match status" value="1"/>
</dbReference>
<dbReference type="FunFam" id="2.40.50.140:FF:000080">
    <property type="entry name" value="Aspartate--tRNA ligase"/>
    <property type="match status" value="1"/>
</dbReference>
<dbReference type="FunFam" id="3.30.1360.30:FF:000001">
    <property type="entry name" value="Aspartate--tRNA ligase"/>
    <property type="match status" value="1"/>
</dbReference>
<dbReference type="Gene3D" id="3.30.930.10">
    <property type="entry name" value="Bira Bifunctional Protein, Domain 2"/>
    <property type="match status" value="1"/>
</dbReference>
<dbReference type="Gene3D" id="3.30.1360.30">
    <property type="entry name" value="GAD-like domain"/>
    <property type="match status" value="1"/>
</dbReference>
<dbReference type="Gene3D" id="2.40.50.140">
    <property type="entry name" value="Nucleic acid-binding proteins"/>
    <property type="match status" value="1"/>
</dbReference>
<dbReference type="HAMAP" id="MF_00044">
    <property type="entry name" value="Asp_tRNA_synth_type1"/>
    <property type="match status" value="1"/>
</dbReference>
<dbReference type="InterPro" id="IPR004364">
    <property type="entry name" value="Aa-tRNA-synt_II"/>
</dbReference>
<dbReference type="InterPro" id="IPR006195">
    <property type="entry name" value="aa-tRNA-synth_II"/>
</dbReference>
<dbReference type="InterPro" id="IPR045864">
    <property type="entry name" value="aa-tRNA-synth_II/BPL/LPL"/>
</dbReference>
<dbReference type="InterPro" id="IPR004524">
    <property type="entry name" value="Asp-tRNA-ligase_1"/>
</dbReference>
<dbReference type="InterPro" id="IPR047089">
    <property type="entry name" value="Asp-tRNA-ligase_1_N"/>
</dbReference>
<dbReference type="InterPro" id="IPR002312">
    <property type="entry name" value="Asp/Asn-tRNA-synth_IIb"/>
</dbReference>
<dbReference type="InterPro" id="IPR047090">
    <property type="entry name" value="AspRS_core"/>
</dbReference>
<dbReference type="InterPro" id="IPR004115">
    <property type="entry name" value="GAD-like_sf"/>
</dbReference>
<dbReference type="InterPro" id="IPR029351">
    <property type="entry name" value="GAD_dom"/>
</dbReference>
<dbReference type="InterPro" id="IPR012340">
    <property type="entry name" value="NA-bd_OB-fold"/>
</dbReference>
<dbReference type="InterPro" id="IPR004365">
    <property type="entry name" value="NA-bd_OB_tRNA"/>
</dbReference>
<dbReference type="NCBIfam" id="TIGR00459">
    <property type="entry name" value="aspS_bact"/>
    <property type="match status" value="1"/>
</dbReference>
<dbReference type="NCBIfam" id="NF001750">
    <property type="entry name" value="PRK00476.1"/>
    <property type="match status" value="1"/>
</dbReference>
<dbReference type="PANTHER" id="PTHR22594:SF5">
    <property type="entry name" value="ASPARTATE--TRNA LIGASE, MITOCHONDRIAL"/>
    <property type="match status" value="1"/>
</dbReference>
<dbReference type="PANTHER" id="PTHR22594">
    <property type="entry name" value="ASPARTYL/LYSYL-TRNA SYNTHETASE"/>
    <property type="match status" value="1"/>
</dbReference>
<dbReference type="Pfam" id="PF02938">
    <property type="entry name" value="GAD"/>
    <property type="match status" value="1"/>
</dbReference>
<dbReference type="Pfam" id="PF00152">
    <property type="entry name" value="tRNA-synt_2"/>
    <property type="match status" value="1"/>
</dbReference>
<dbReference type="Pfam" id="PF01336">
    <property type="entry name" value="tRNA_anti-codon"/>
    <property type="match status" value="1"/>
</dbReference>
<dbReference type="PRINTS" id="PR01042">
    <property type="entry name" value="TRNASYNTHASP"/>
</dbReference>
<dbReference type="SUPFAM" id="SSF55681">
    <property type="entry name" value="Class II aaRS and biotin synthetases"/>
    <property type="match status" value="1"/>
</dbReference>
<dbReference type="SUPFAM" id="SSF55261">
    <property type="entry name" value="GAD domain-like"/>
    <property type="match status" value="1"/>
</dbReference>
<dbReference type="SUPFAM" id="SSF50249">
    <property type="entry name" value="Nucleic acid-binding proteins"/>
    <property type="match status" value="1"/>
</dbReference>
<dbReference type="PROSITE" id="PS50862">
    <property type="entry name" value="AA_TRNA_LIGASE_II"/>
    <property type="match status" value="1"/>
</dbReference>
<reference key="1">
    <citation type="journal article" date="2011" name="J. Bacteriol.">
        <title>Comparative genomics of 28 Salmonella enterica isolates: evidence for CRISPR-mediated adaptive sublineage evolution.</title>
        <authorList>
            <person name="Fricke W.F."/>
            <person name="Mammel M.K."/>
            <person name="McDermott P.F."/>
            <person name="Tartera C."/>
            <person name="White D.G."/>
            <person name="Leclerc J.E."/>
            <person name="Ravel J."/>
            <person name="Cebula T.A."/>
        </authorList>
    </citation>
    <scope>NUCLEOTIDE SEQUENCE [LARGE SCALE GENOMIC DNA]</scope>
    <source>
        <strain>SL483</strain>
    </source>
</reference>
<name>SYD_SALA4</name>